<evidence type="ECO:0000255" key="1">
    <source>
        <dbReference type="HAMAP-Rule" id="MF_01234"/>
    </source>
</evidence>
<proteinExistence type="inferred from homology"/>
<feature type="chain" id="PRO_1000139698" description="N-acetylmannosamine kinase">
    <location>
        <begin position="1"/>
        <end position="290"/>
    </location>
</feature>
<feature type="binding site" evidence="1">
    <location>
        <begin position="6"/>
        <end position="13"/>
    </location>
    <ligand>
        <name>ATP</name>
        <dbReference type="ChEBI" id="CHEBI:30616"/>
    </ligand>
</feature>
<feature type="binding site" evidence="1">
    <location>
        <begin position="132"/>
        <end position="139"/>
    </location>
    <ligand>
        <name>ATP</name>
        <dbReference type="ChEBI" id="CHEBI:30616"/>
    </ligand>
</feature>
<feature type="binding site" evidence="1">
    <location>
        <position position="156"/>
    </location>
    <ligand>
        <name>Zn(2+)</name>
        <dbReference type="ChEBI" id="CHEBI:29105"/>
    </ligand>
</feature>
<feature type="binding site" evidence="1">
    <location>
        <position position="166"/>
    </location>
    <ligand>
        <name>Zn(2+)</name>
        <dbReference type="ChEBI" id="CHEBI:29105"/>
    </ligand>
</feature>
<feature type="binding site" evidence="1">
    <location>
        <position position="168"/>
    </location>
    <ligand>
        <name>Zn(2+)</name>
        <dbReference type="ChEBI" id="CHEBI:29105"/>
    </ligand>
</feature>
<feature type="binding site" evidence="1">
    <location>
        <position position="173"/>
    </location>
    <ligand>
        <name>Zn(2+)</name>
        <dbReference type="ChEBI" id="CHEBI:29105"/>
    </ligand>
</feature>
<keyword id="KW-0067">ATP-binding</keyword>
<keyword id="KW-0119">Carbohydrate metabolism</keyword>
<keyword id="KW-0418">Kinase</keyword>
<keyword id="KW-0479">Metal-binding</keyword>
<keyword id="KW-0547">Nucleotide-binding</keyword>
<keyword id="KW-0808">Transferase</keyword>
<keyword id="KW-0862">Zinc</keyword>
<reference key="1">
    <citation type="journal article" date="2010" name="J. Bacteriol.">
        <title>Genome sequence of the deep-rooted Yersinia pestis strain Angola reveals new insights into the evolution and pangenome of the plague bacterium.</title>
        <authorList>
            <person name="Eppinger M."/>
            <person name="Worsham P.L."/>
            <person name="Nikolich M.P."/>
            <person name="Riley D.R."/>
            <person name="Sebastian Y."/>
            <person name="Mou S."/>
            <person name="Achtman M."/>
            <person name="Lindler L.E."/>
            <person name="Ravel J."/>
        </authorList>
    </citation>
    <scope>NUCLEOTIDE SEQUENCE [LARGE SCALE GENOMIC DNA]</scope>
    <source>
        <strain>Angola</strain>
    </source>
</reference>
<accession>A9QZJ5</accession>
<gene>
    <name evidence="1" type="primary">nanK</name>
    <name type="ordered locus">YpAngola_A2773</name>
</gene>
<organism>
    <name type="scientific">Yersinia pestis bv. Antiqua (strain Angola)</name>
    <dbReference type="NCBI Taxonomy" id="349746"/>
    <lineage>
        <taxon>Bacteria</taxon>
        <taxon>Pseudomonadati</taxon>
        <taxon>Pseudomonadota</taxon>
        <taxon>Gammaproteobacteria</taxon>
        <taxon>Enterobacterales</taxon>
        <taxon>Yersiniaceae</taxon>
        <taxon>Yersinia</taxon>
    </lineage>
</organism>
<name>NANK_YERPG</name>
<sequence>MGKGLALDIGGTKIAAAVVTESGMLIGRQQIATPRGGAGQLAAALETLIAPYRHQVDFIAVASTGIISGGRLTALNPANLGGLADFPLYDCIRSISDLPCVLLNDGQAAAWAEYQALGDKNDNMMFVTVSTGVGGGIILNKKLLVGQRGLAGHIGHTLSDPHGVLCGCGRRGCVESVASGTAIGAETLGWKQPVSAATVFDMAQQGDAQAGKVINRSAAAIAQMLADMKMALDLEVVILGGSVGLAVGYLERVVAAQKTLPGIYRVPVQEAHHRQDSGLLGAALWARTSL</sequence>
<dbReference type="EC" id="2.7.1.60" evidence="1"/>
<dbReference type="EMBL" id="CP000901">
    <property type="protein sequence ID" value="ABX88004.1"/>
    <property type="molecule type" value="Genomic_DNA"/>
</dbReference>
<dbReference type="RefSeq" id="WP_002208516.1">
    <property type="nucleotide sequence ID" value="NZ_CP009935.1"/>
</dbReference>
<dbReference type="SMR" id="A9QZJ5"/>
<dbReference type="KEGG" id="ypg:YpAngola_A2773"/>
<dbReference type="PATRIC" id="fig|349746.12.peg.3806"/>
<dbReference type="UniPathway" id="UPA00629">
    <property type="reaction ID" value="UER00681"/>
</dbReference>
<dbReference type="GO" id="GO:0005524">
    <property type="term" value="F:ATP binding"/>
    <property type="evidence" value="ECO:0007669"/>
    <property type="project" value="UniProtKB-UniRule"/>
</dbReference>
<dbReference type="GO" id="GO:0009384">
    <property type="term" value="F:N-acylmannosamine kinase activity"/>
    <property type="evidence" value="ECO:0007669"/>
    <property type="project" value="UniProtKB-UniRule"/>
</dbReference>
<dbReference type="GO" id="GO:0008270">
    <property type="term" value="F:zinc ion binding"/>
    <property type="evidence" value="ECO:0007669"/>
    <property type="project" value="UniProtKB-UniRule"/>
</dbReference>
<dbReference type="GO" id="GO:0019262">
    <property type="term" value="P:N-acetylneuraminate catabolic process"/>
    <property type="evidence" value="ECO:0007669"/>
    <property type="project" value="UniProtKB-UniRule"/>
</dbReference>
<dbReference type="CDD" id="cd24069">
    <property type="entry name" value="ASKHA_NBD_ROK_EcNanK-like"/>
    <property type="match status" value="1"/>
</dbReference>
<dbReference type="FunFam" id="3.30.420.40:FF:000063">
    <property type="entry name" value="N-acetylmannosamine kinase"/>
    <property type="match status" value="1"/>
</dbReference>
<dbReference type="Gene3D" id="3.30.420.40">
    <property type="match status" value="2"/>
</dbReference>
<dbReference type="HAMAP" id="MF_01234">
    <property type="entry name" value="ManNAc_kinase"/>
    <property type="match status" value="1"/>
</dbReference>
<dbReference type="InterPro" id="IPR043129">
    <property type="entry name" value="ATPase_NBD"/>
</dbReference>
<dbReference type="InterPro" id="IPR023945">
    <property type="entry name" value="ManNAc_kinase_bac"/>
</dbReference>
<dbReference type="InterPro" id="IPR000600">
    <property type="entry name" value="ROK"/>
</dbReference>
<dbReference type="InterPro" id="IPR049874">
    <property type="entry name" value="ROK_cs"/>
</dbReference>
<dbReference type="NCBIfam" id="NF003461">
    <property type="entry name" value="PRK05082.1"/>
    <property type="match status" value="1"/>
</dbReference>
<dbReference type="PANTHER" id="PTHR18964:SF169">
    <property type="entry name" value="N-ACETYLMANNOSAMINE KINASE"/>
    <property type="match status" value="1"/>
</dbReference>
<dbReference type="PANTHER" id="PTHR18964">
    <property type="entry name" value="ROK (REPRESSOR, ORF, KINASE) FAMILY"/>
    <property type="match status" value="1"/>
</dbReference>
<dbReference type="Pfam" id="PF00480">
    <property type="entry name" value="ROK"/>
    <property type="match status" value="1"/>
</dbReference>
<dbReference type="SUPFAM" id="SSF53067">
    <property type="entry name" value="Actin-like ATPase domain"/>
    <property type="match status" value="1"/>
</dbReference>
<dbReference type="PROSITE" id="PS01125">
    <property type="entry name" value="ROK"/>
    <property type="match status" value="1"/>
</dbReference>
<protein>
    <recommendedName>
        <fullName evidence="1">N-acetylmannosamine kinase</fullName>
        <ecNumber evidence="1">2.7.1.60</ecNumber>
    </recommendedName>
    <alternativeName>
        <fullName evidence="1">ManNAc kinase</fullName>
    </alternativeName>
    <alternativeName>
        <fullName evidence="1">N-acetyl-D-mannosamine kinase</fullName>
    </alternativeName>
</protein>
<comment type="function">
    <text evidence="1">Catalyzes the phosphorylation of N-acetylmannosamine (ManNAc) to ManNAc-6-P.</text>
</comment>
<comment type="catalytic activity">
    <reaction evidence="1">
        <text>an N-acyl-D-mannosamine + ATP = an N-acyl-D-mannosamine 6-phosphate + ADP + H(+)</text>
        <dbReference type="Rhea" id="RHEA:23832"/>
        <dbReference type="ChEBI" id="CHEBI:15378"/>
        <dbReference type="ChEBI" id="CHEBI:16062"/>
        <dbReference type="ChEBI" id="CHEBI:30616"/>
        <dbReference type="ChEBI" id="CHEBI:57666"/>
        <dbReference type="ChEBI" id="CHEBI:456216"/>
        <dbReference type="EC" id="2.7.1.60"/>
    </reaction>
</comment>
<comment type="pathway">
    <text evidence="1">Amino-sugar metabolism; N-acetylneuraminate degradation; D-fructose 6-phosphate from N-acetylneuraminate: step 2/5.</text>
</comment>
<comment type="subunit">
    <text evidence="1">Homodimer.</text>
</comment>
<comment type="similarity">
    <text evidence="1">Belongs to the ROK (NagC/XylR) family. NanK subfamily.</text>
</comment>